<comment type="function">
    <text evidence="1">Endonuclease IV plays a role in DNA repair. It cleaves phosphodiester bonds at apurinic or apyrimidinic (AP) sites, generating a 3'-hydroxyl group and a 5'-terminal sugar phosphate.</text>
</comment>
<comment type="catalytic activity">
    <reaction evidence="1">
        <text>Endonucleolytic cleavage to 5'-phosphooligonucleotide end-products.</text>
        <dbReference type="EC" id="3.1.21.2"/>
    </reaction>
</comment>
<comment type="cofactor">
    <cofactor evidence="1">
        <name>Zn(2+)</name>
        <dbReference type="ChEBI" id="CHEBI:29105"/>
    </cofactor>
    <text evidence="1">Binds 3 Zn(2+) ions.</text>
</comment>
<comment type="similarity">
    <text evidence="1">Belongs to the AP endonuclease 2 family.</text>
</comment>
<evidence type="ECO:0000255" key="1">
    <source>
        <dbReference type="HAMAP-Rule" id="MF_00152"/>
    </source>
</evidence>
<proteinExistence type="inferred from homology"/>
<organism>
    <name type="scientific">Staphylococcus aureus (strain MSSA476)</name>
    <dbReference type="NCBI Taxonomy" id="282459"/>
    <lineage>
        <taxon>Bacteria</taxon>
        <taxon>Bacillati</taxon>
        <taxon>Bacillota</taxon>
        <taxon>Bacilli</taxon>
        <taxon>Bacillales</taxon>
        <taxon>Staphylococcaceae</taxon>
        <taxon>Staphylococcus</taxon>
    </lineage>
</organism>
<accession>Q6G909</accession>
<reference key="1">
    <citation type="journal article" date="2004" name="Proc. Natl. Acad. Sci. U.S.A.">
        <title>Complete genomes of two clinical Staphylococcus aureus strains: evidence for the rapid evolution of virulence and drug resistance.</title>
        <authorList>
            <person name="Holden M.T.G."/>
            <person name="Feil E.J."/>
            <person name="Lindsay J.A."/>
            <person name="Peacock S.J."/>
            <person name="Day N.P.J."/>
            <person name="Enright M.C."/>
            <person name="Foster T.J."/>
            <person name="Moore C.E."/>
            <person name="Hurst L."/>
            <person name="Atkin R."/>
            <person name="Barron A."/>
            <person name="Bason N."/>
            <person name="Bentley S.D."/>
            <person name="Chillingworth C."/>
            <person name="Chillingworth T."/>
            <person name="Churcher C."/>
            <person name="Clark L."/>
            <person name="Corton C."/>
            <person name="Cronin A."/>
            <person name="Doggett J."/>
            <person name="Dowd L."/>
            <person name="Feltwell T."/>
            <person name="Hance Z."/>
            <person name="Harris B."/>
            <person name="Hauser H."/>
            <person name="Holroyd S."/>
            <person name="Jagels K."/>
            <person name="James K.D."/>
            <person name="Lennard N."/>
            <person name="Line A."/>
            <person name="Mayes R."/>
            <person name="Moule S."/>
            <person name="Mungall K."/>
            <person name="Ormond D."/>
            <person name="Quail M.A."/>
            <person name="Rabbinowitsch E."/>
            <person name="Rutherford K.M."/>
            <person name="Sanders M."/>
            <person name="Sharp S."/>
            <person name="Simmonds M."/>
            <person name="Stevens K."/>
            <person name="Whitehead S."/>
            <person name="Barrell B.G."/>
            <person name="Spratt B.G."/>
            <person name="Parkhill J."/>
        </authorList>
    </citation>
    <scope>NUCLEOTIDE SEQUENCE [LARGE SCALE GENOMIC DNA]</scope>
    <source>
        <strain>MSSA476</strain>
    </source>
</reference>
<name>END4_STAAS</name>
<feature type="chain" id="PRO_0000190873" description="Probable endonuclease 4">
    <location>
        <begin position="1"/>
        <end position="296"/>
    </location>
</feature>
<feature type="binding site" evidence="1">
    <location>
        <position position="68"/>
    </location>
    <ligand>
        <name>Zn(2+)</name>
        <dbReference type="ChEBI" id="CHEBI:29105"/>
        <label>1</label>
    </ligand>
</feature>
<feature type="binding site" evidence="1">
    <location>
        <position position="109"/>
    </location>
    <ligand>
        <name>Zn(2+)</name>
        <dbReference type="ChEBI" id="CHEBI:29105"/>
        <label>1</label>
    </ligand>
</feature>
<feature type="binding site" evidence="1">
    <location>
        <position position="144"/>
    </location>
    <ligand>
        <name>Zn(2+)</name>
        <dbReference type="ChEBI" id="CHEBI:29105"/>
        <label>1</label>
    </ligand>
</feature>
<feature type="binding site" evidence="1">
    <location>
        <position position="144"/>
    </location>
    <ligand>
        <name>Zn(2+)</name>
        <dbReference type="ChEBI" id="CHEBI:29105"/>
        <label>2</label>
    </ligand>
</feature>
<feature type="binding site" evidence="1">
    <location>
        <position position="178"/>
    </location>
    <ligand>
        <name>Zn(2+)</name>
        <dbReference type="ChEBI" id="CHEBI:29105"/>
        <label>2</label>
    </ligand>
</feature>
<feature type="binding site" evidence="1">
    <location>
        <position position="181"/>
    </location>
    <ligand>
        <name>Zn(2+)</name>
        <dbReference type="ChEBI" id="CHEBI:29105"/>
        <label>3</label>
    </ligand>
</feature>
<feature type="binding site" evidence="1">
    <location>
        <position position="213"/>
    </location>
    <ligand>
        <name>Zn(2+)</name>
        <dbReference type="ChEBI" id="CHEBI:29105"/>
        <label>2</label>
    </ligand>
</feature>
<feature type="binding site" evidence="1">
    <location>
        <position position="226"/>
    </location>
    <ligand>
        <name>Zn(2+)</name>
        <dbReference type="ChEBI" id="CHEBI:29105"/>
        <label>3</label>
    </ligand>
</feature>
<feature type="binding site" evidence="1">
    <location>
        <position position="228"/>
    </location>
    <ligand>
        <name>Zn(2+)</name>
        <dbReference type="ChEBI" id="CHEBI:29105"/>
        <label>3</label>
    </ligand>
</feature>
<feature type="binding site" evidence="1">
    <location>
        <position position="258"/>
    </location>
    <ligand>
        <name>Zn(2+)</name>
        <dbReference type="ChEBI" id="CHEBI:29105"/>
        <label>2</label>
    </ligand>
</feature>
<gene>
    <name evidence="1" type="primary">nfo</name>
    <name type="ordered locus">SAS1495</name>
</gene>
<keyword id="KW-0227">DNA damage</keyword>
<keyword id="KW-0234">DNA repair</keyword>
<keyword id="KW-0255">Endonuclease</keyword>
<keyword id="KW-0378">Hydrolase</keyword>
<keyword id="KW-0479">Metal-binding</keyword>
<keyword id="KW-0540">Nuclease</keyword>
<keyword id="KW-0862">Zinc</keyword>
<dbReference type="EC" id="3.1.21.2" evidence="1"/>
<dbReference type="EMBL" id="BX571857">
    <property type="protein sequence ID" value="CAG43296.1"/>
    <property type="molecule type" value="Genomic_DNA"/>
</dbReference>
<dbReference type="RefSeq" id="WP_000924220.1">
    <property type="nucleotide sequence ID" value="NC_002953.3"/>
</dbReference>
<dbReference type="SMR" id="Q6G909"/>
<dbReference type="KEGG" id="sas:SAS1495"/>
<dbReference type="HOGENOM" id="CLU_025885_4_1_9"/>
<dbReference type="GO" id="GO:0008833">
    <property type="term" value="F:deoxyribonuclease IV (phage-T4-induced) activity"/>
    <property type="evidence" value="ECO:0007669"/>
    <property type="project" value="UniProtKB-UniRule"/>
</dbReference>
<dbReference type="GO" id="GO:0003677">
    <property type="term" value="F:DNA binding"/>
    <property type="evidence" value="ECO:0007669"/>
    <property type="project" value="InterPro"/>
</dbReference>
<dbReference type="GO" id="GO:0003906">
    <property type="term" value="F:DNA-(apurinic or apyrimidinic site) endonuclease activity"/>
    <property type="evidence" value="ECO:0007669"/>
    <property type="project" value="TreeGrafter"/>
</dbReference>
<dbReference type="GO" id="GO:0008081">
    <property type="term" value="F:phosphoric diester hydrolase activity"/>
    <property type="evidence" value="ECO:0007669"/>
    <property type="project" value="TreeGrafter"/>
</dbReference>
<dbReference type="GO" id="GO:0008270">
    <property type="term" value="F:zinc ion binding"/>
    <property type="evidence" value="ECO:0007669"/>
    <property type="project" value="UniProtKB-UniRule"/>
</dbReference>
<dbReference type="GO" id="GO:0006284">
    <property type="term" value="P:base-excision repair"/>
    <property type="evidence" value="ECO:0007669"/>
    <property type="project" value="TreeGrafter"/>
</dbReference>
<dbReference type="CDD" id="cd00019">
    <property type="entry name" value="AP2Ec"/>
    <property type="match status" value="1"/>
</dbReference>
<dbReference type="FunFam" id="3.20.20.150:FF:000001">
    <property type="entry name" value="Probable endonuclease 4"/>
    <property type="match status" value="1"/>
</dbReference>
<dbReference type="Gene3D" id="3.20.20.150">
    <property type="entry name" value="Divalent-metal-dependent TIM barrel enzymes"/>
    <property type="match status" value="1"/>
</dbReference>
<dbReference type="HAMAP" id="MF_00152">
    <property type="entry name" value="Nfo"/>
    <property type="match status" value="1"/>
</dbReference>
<dbReference type="InterPro" id="IPR001719">
    <property type="entry name" value="AP_endonuc_2"/>
</dbReference>
<dbReference type="InterPro" id="IPR018246">
    <property type="entry name" value="AP_endonuc_F2_Zn_BS"/>
</dbReference>
<dbReference type="InterPro" id="IPR036237">
    <property type="entry name" value="Xyl_isomerase-like_sf"/>
</dbReference>
<dbReference type="InterPro" id="IPR013022">
    <property type="entry name" value="Xyl_isomerase-like_TIM-brl"/>
</dbReference>
<dbReference type="NCBIfam" id="TIGR00587">
    <property type="entry name" value="nfo"/>
    <property type="match status" value="1"/>
</dbReference>
<dbReference type="NCBIfam" id="NF002196">
    <property type="entry name" value="PRK01060.1-1"/>
    <property type="match status" value="1"/>
</dbReference>
<dbReference type="PANTHER" id="PTHR21445:SF0">
    <property type="entry name" value="APURINIC-APYRIMIDINIC ENDONUCLEASE"/>
    <property type="match status" value="1"/>
</dbReference>
<dbReference type="PANTHER" id="PTHR21445">
    <property type="entry name" value="ENDONUCLEASE IV ENDODEOXYRIBONUCLEASE IV"/>
    <property type="match status" value="1"/>
</dbReference>
<dbReference type="Pfam" id="PF01261">
    <property type="entry name" value="AP_endonuc_2"/>
    <property type="match status" value="1"/>
</dbReference>
<dbReference type="SMART" id="SM00518">
    <property type="entry name" value="AP2Ec"/>
    <property type="match status" value="1"/>
</dbReference>
<dbReference type="SUPFAM" id="SSF51658">
    <property type="entry name" value="Xylose isomerase-like"/>
    <property type="match status" value="1"/>
</dbReference>
<dbReference type="PROSITE" id="PS00729">
    <property type="entry name" value="AP_NUCLEASE_F2_1"/>
    <property type="match status" value="1"/>
</dbReference>
<dbReference type="PROSITE" id="PS00730">
    <property type="entry name" value="AP_NUCLEASE_F2_2"/>
    <property type="match status" value="1"/>
</dbReference>
<dbReference type="PROSITE" id="PS00731">
    <property type="entry name" value="AP_NUCLEASE_F2_3"/>
    <property type="match status" value="1"/>
</dbReference>
<dbReference type="PROSITE" id="PS51432">
    <property type="entry name" value="AP_NUCLEASE_F2_4"/>
    <property type="match status" value="1"/>
</dbReference>
<protein>
    <recommendedName>
        <fullName evidence="1">Probable endonuclease 4</fullName>
        <ecNumber evidence="1">3.1.21.2</ecNumber>
    </recommendedName>
    <alternativeName>
        <fullName evidence="1">Endodeoxyribonuclease IV</fullName>
    </alternativeName>
    <alternativeName>
        <fullName evidence="1">Endonuclease IV</fullName>
    </alternativeName>
</protein>
<sequence length="296" mass="33185">MLLGSHVSMSGKKMLEGSAIEAYEYGETTFMIYTGAPQNTRRKSIEDLNITKGHEVMEKYGLSNIVVHAPYIINIANTTKPETFNLGVDFLQQEIERTQAIGAKDIVLHPGAHVGAGVDAGINKIIEGLNEVLTNDNNVRIALETMAGKGTEIGRSFEELARIIDGVHNNERLSVCFDTCHTHDAGYNVKEDFDGVLNEFDKIIGVDRIKVVHVNDSKNDRGAQKDRHENIGFGYIGFDALNYIVHHDSFKDIPKILETPYVGEDKKNKKPPYKLEIEMLKQQQFDPELKNKVMQQ</sequence>